<comment type="function">
    <text evidence="1">Catalyzes the stereoselective decarboxylation of 2-oxo-4-hydroxy-4-carboxy-5-ureidoimidazoline (OHCU) to (S)-allantoin.</text>
</comment>
<comment type="catalytic activity">
    <reaction>
        <text>5-hydroxy-2-oxo-4-ureido-2,5-dihydro-1H-imidazole-5-carboxylate + H(+) = (S)-allantoin + CO2</text>
        <dbReference type="Rhea" id="RHEA:26301"/>
        <dbReference type="ChEBI" id="CHEBI:15378"/>
        <dbReference type="ChEBI" id="CHEBI:15678"/>
        <dbReference type="ChEBI" id="CHEBI:16526"/>
        <dbReference type="ChEBI" id="CHEBI:58639"/>
        <dbReference type="EC" id="4.1.1.97"/>
    </reaction>
</comment>
<comment type="pathway">
    <text>Purine metabolism; urate degradation; (S)-allantoin from urate: step 3/3.</text>
</comment>
<comment type="similarity">
    <text evidence="3">Belongs to the OHCU decarboxylase family.</text>
</comment>
<accession>D4GPU8</accession>
<evidence type="ECO:0000250" key="1"/>
<evidence type="ECO:0000256" key="2">
    <source>
        <dbReference type="SAM" id="MobiDB-lite"/>
    </source>
</evidence>
<evidence type="ECO:0000305" key="3"/>
<reference key="1">
    <citation type="journal article" date="2010" name="PLoS ONE">
        <title>The complete genome sequence of Haloferax volcanii DS2, a model archaeon.</title>
        <authorList>
            <person name="Hartman A.L."/>
            <person name="Norais C."/>
            <person name="Badger J.H."/>
            <person name="Delmas S."/>
            <person name="Haldenby S."/>
            <person name="Madupu R."/>
            <person name="Robinson J."/>
            <person name="Khouri H."/>
            <person name="Ren Q."/>
            <person name="Lowe T.M."/>
            <person name="Maupin-Furlow J."/>
            <person name="Pohlschroder M."/>
            <person name="Daniels C."/>
            <person name="Pfeiffer F."/>
            <person name="Allers T."/>
            <person name="Eisen J.A."/>
        </authorList>
    </citation>
    <scope>NUCLEOTIDE SEQUENCE [LARGE SCALE GENOMIC DNA]</scope>
    <source>
        <strain>ATCC 29605 / DSM 3757 / JCM 8879 / NBRC 14742 / NCIMB 2012 / VKM B-1768 / DS2</strain>
    </source>
</reference>
<sequence>MHELTLQQVNRLDDDSFVDAFGEIYEHSPWVAERARSSRPFSSVDELRSAMKRAVEDASREKQLQLLRAHPDLGERTEMTDASEAEQASAELDSLSRSQYETFQRLNETYRERFGFPFVMAVKDENPDAIAAAMERRVDHSESTEFRTALDEVHTIAELRLAERFSSE</sequence>
<organism>
    <name type="scientific">Haloferax volcanii (strain ATCC 29605 / DSM 3757 / JCM 8879 / NBRC 14742 / NCIMB 2012 / VKM B-1768 / DS2)</name>
    <name type="common">Halobacterium volcanii</name>
    <dbReference type="NCBI Taxonomy" id="309800"/>
    <lineage>
        <taxon>Archaea</taxon>
        <taxon>Methanobacteriati</taxon>
        <taxon>Methanobacteriota</taxon>
        <taxon>Stenosarchaea group</taxon>
        <taxon>Halobacteria</taxon>
        <taxon>Halobacteriales</taxon>
        <taxon>Haloferacaceae</taxon>
        <taxon>Haloferax</taxon>
    </lineage>
</organism>
<name>URAD_HALVD</name>
<keyword id="KW-0210">Decarboxylase</keyword>
<keyword id="KW-0456">Lyase</keyword>
<keyword id="KW-0560">Oxidoreductase</keyword>
<keyword id="KW-0614">Plasmid</keyword>
<keyword id="KW-0659">Purine metabolism</keyword>
<keyword id="KW-1185">Reference proteome</keyword>
<proteinExistence type="inferred from homology"/>
<geneLocation type="plasmid">
    <name>pHV3</name>
</geneLocation>
<feature type="chain" id="PRO_0000411958" description="2-oxo-4-hydroxy-4-carboxy-5-ureidoimidazoline decarboxylase">
    <location>
        <begin position="1"/>
        <end position="168"/>
    </location>
</feature>
<feature type="region of interest" description="Disordered" evidence="2">
    <location>
        <begin position="70"/>
        <end position="93"/>
    </location>
</feature>
<feature type="compositionally biased region" description="Basic and acidic residues" evidence="2">
    <location>
        <begin position="70"/>
        <end position="79"/>
    </location>
</feature>
<feature type="active site" description="Proton donor; for OHCU decarboxylase activity" evidence="1">
    <location>
        <position position="70"/>
    </location>
</feature>
<feature type="binding site" evidence="1">
    <location>
        <position position="71"/>
    </location>
    <ligand>
        <name>substrate</name>
    </ligand>
</feature>
<feature type="binding site" evidence="1">
    <location>
        <begin position="83"/>
        <end position="87"/>
    </location>
    <ligand>
        <name>substrate</name>
    </ligand>
</feature>
<feature type="binding site" evidence="1">
    <location>
        <begin position="118"/>
        <end position="122"/>
    </location>
    <ligand>
        <name>substrate</name>
    </ligand>
</feature>
<protein>
    <recommendedName>
        <fullName>2-oxo-4-hydroxy-4-carboxy-5-ureidoimidazoline decarboxylase</fullName>
        <shortName>OHCU decarboxylase</shortName>
        <ecNumber>4.1.1.97</ecNumber>
    </recommendedName>
</protein>
<dbReference type="EC" id="4.1.1.97"/>
<dbReference type="EMBL" id="CP001953">
    <property type="protein sequence ID" value="ADE01468.1"/>
    <property type="molecule type" value="Genomic_DNA"/>
</dbReference>
<dbReference type="RefSeq" id="WP_004041239.1">
    <property type="nucleotide sequence ID" value="NC_013964.1"/>
</dbReference>
<dbReference type="SMR" id="D4GPU8"/>
<dbReference type="PaxDb" id="309800-C498_02150"/>
<dbReference type="EnsemblBacteria" id="ADE01468">
    <property type="protein sequence ID" value="ADE01468"/>
    <property type="gene ID" value="HVO_B0301"/>
</dbReference>
<dbReference type="GeneID" id="8919056"/>
<dbReference type="KEGG" id="hvo:HVO_B0301"/>
<dbReference type="eggNOG" id="arCOG11423">
    <property type="taxonomic scope" value="Archaea"/>
</dbReference>
<dbReference type="HOGENOM" id="CLU_092522_1_1_2"/>
<dbReference type="OrthoDB" id="195007at2157"/>
<dbReference type="UniPathway" id="UPA00394">
    <property type="reaction ID" value="UER00652"/>
</dbReference>
<dbReference type="Proteomes" id="UP000008243">
    <property type="component" value="Plasmid pHV3"/>
</dbReference>
<dbReference type="GO" id="GO:0051997">
    <property type="term" value="F:2-oxo-4-hydroxy-4-carboxy-5-ureidoimidazoline decarboxylase activity"/>
    <property type="evidence" value="ECO:0007669"/>
    <property type="project" value="UniProtKB-EC"/>
</dbReference>
<dbReference type="GO" id="GO:0016491">
    <property type="term" value="F:oxidoreductase activity"/>
    <property type="evidence" value="ECO:0007669"/>
    <property type="project" value="UniProtKB-KW"/>
</dbReference>
<dbReference type="GO" id="GO:0000255">
    <property type="term" value="P:allantoin metabolic process"/>
    <property type="evidence" value="ECO:0007669"/>
    <property type="project" value="InterPro"/>
</dbReference>
<dbReference type="GO" id="GO:0006144">
    <property type="term" value="P:purine nucleobase metabolic process"/>
    <property type="evidence" value="ECO:0007669"/>
    <property type="project" value="UniProtKB-KW"/>
</dbReference>
<dbReference type="GO" id="GO:0019628">
    <property type="term" value="P:urate catabolic process"/>
    <property type="evidence" value="ECO:0007669"/>
    <property type="project" value="UniProtKB-UniPathway"/>
</dbReference>
<dbReference type="Gene3D" id="1.10.3330.10">
    <property type="entry name" value="Oxo-4-hydroxy-4-carboxy-5-ureidoimidazoline decarboxylase"/>
    <property type="match status" value="1"/>
</dbReference>
<dbReference type="InterPro" id="IPR018020">
    <property type="entry name" value="OHCU_decarboxylase"/>
</dbReference>
<dbReference type="InterPro" id="IPR017580">
    <property type="entry name" value="OHCU_decarboxylase-1"/>
</dbReference>
<dbReference type="InterPro" id="IPR036778">
    <property type="entry name" value="OHCU_decarboxylase_sf"/>
</dbReference>
<dbReference type="NCBIfam" id="TIGR03164">
    <property type="entry name" value="UHCUDC"/>
    <property type="match status" value="1"/>
</dbReference>
<dbReference type="PANTHER" id="PTHR43466">
    <property type="entry name" value="2-OXO-4-HYDROXY-4-CARBOXY-5-UREIDOIMIDAZOLINE DECARBOXYLASE-RELATED"/>
    <property type="match status" value="1"/>
</dbReference>
<dbReference type="PANTHER" id="PTHR43466:SF1">
    <property type="entry name" value="2-OXO-4-HYDROXY-4-CARBOXY-5-UREIDOIMIDAZOLINE DECARBOXYLASE-RELATED"/>
    <property type="match status" value="1"/>
</dbReference>
<dbReference type="Pfam" id="PF09349">
    <property type="entry name" value="OHCU_decarbox"/>
    <property type="match status" value="1"/>
</dbReference>
<dbReference type="SUPFAM" id="SSF158694">
    <property type="entry name" value="UraD-Like"/>
    <property type="match status" value="1"/>
</dbReference>
<gene>
    <name type="ordered locus">HVO_B0301</name>
</gene>